<keyword id="KW-0046">Antibiotic resistance</keyword>
<keyword id="KW-0997">Cell inner membrane</keyword>
<keyword id="KW-1003">Cell membrane</keyword>
<keyword id="KW-0133">Cell shape</keyword>
<keyword id="KW-0961">Cell wall biogenesis/degradation</keyword>
<keyword id="KW-0378">Hydrolase</keyword>
<keyword id="KW-0472">Membrane</keyword>
<keyword id="KW-0573">Peptidoglycan synthesis</keyword>
<keyword id="KW-1185">Reference proteome</keyword>
<keyword id="KW-0812">Transmembrane</keyword>
<keyword id="KW-1133">Transmembrane helix</keyword>
<comment type="function">
    <text evidence="1">Catalyzes the dephosphorylation of undecaprenyl diphosphate (UPP). Confers resistance to bacitracin.</text>
</comment>
<comment type="catalytic activity">
    <reaction evidence="1">
        <text>di-trans,octa-cis-undecaprenyl diphosphate + H2O = di-trans,octa-cis-undecaprenyl phosphate + phosphate + H(+)</text>
        <dbReference type="Rhea" id="RHEA:28094"/>
        <dbReference type="ChEBI" id="CHEBI:15377"/>
        <dbReference type="ChEBI" id="CHEBI:15378"/>
        <dbReference type="ChEBI" id="CHEBI:43474"/>
        <dbReference type="ChEBI" id="CHEBI:58405"/>
        <dbReference type="ChEBI" id="CHEBI:60392"/>
        <dbReference type="EC" id="3.6.1.27"/>
    </reaction>
</comment>
<comment type="subcellular location">
    <subcellularLocation>
        <location evidence="1">Cell inner membrane</location>
        <topology evidence="1">Multi-pass membrane protein</topology>
    </subcellularLocation>
</comment>
<comment type="miscellaneous">
    <text>Bacitracin is thought to be involved in the inhibition of peptidoglycan synthesis by sequestering undecaprenyl diphosphate, thereby reducing the pool of lipid carrier available.</text>
</comment>
<comment type="similarity">
    <text evidence="1">Belongs to the UppP family.</text>
</comment>
<gene>
    <name evidence="1" type="primary">uppP</name>
    <name type="ordered locus">Noc_2835</name>
</gene>
<proteinExistence type="inferred from homology"/>
<name>UPPP_NITOC</name>
<evidence type="ECO:0000255" key="1">
    <source>
        <dbReference type="HAMAP-Rule" id="MF_01006"/>
    </source>
</evidence>
<feature type="chain" id="PRO_0000227622" description="Undecaprenyl-diphosphatase">
    <location>
        <begin position="1"/>
        <end position="265"/>
    </location>
</feature>
<feature type="transmembrane region" description="Helical" evidence="1">
    <location>
        <begin position="1"/>
        <end position="21"/>
    </location>
</feature>
<feature type="transmembrane region" description="Helical" evidence="1">
    <location>
        <begin position="39"/>
        <end position="61"/>
    </location>
</feature>
<feature type="transmembrane region" description="Helical" evidence="1">
    <location>
        <begin position="85"/>
        <end position="105"/>
    </location>
</feature>
<feature type="transmembrane region" description="Helical" evidence="1">
    <location>
        <begin position="115"/>
        <end position="135"/>
    </location>
</feature>
<feature type="transmembrane region" description="Helical" evidence="1">
    <location>
        <begin position="149"/>
        <end position="169"/>
    </location>
</feature>
<feature type="transmembrane region" description="Helical" evidence="1">
    <location>
        <begin position="187"/>
        <end position="207"/>
    </location>
</feature>
<feature type="transmembrane region" description="Helical" evidence="1">
    <location>
        <begin position="218"/>
        <end position="238"/>
    </location>
</feature>
<feature type="transmembrane region" description="Helical" evidence="1">
    <location>
        <begin position="244"/>
        <end position="264"/>
    </location>
</feature>
<accession>Q3J7B5</accession>
<protein>
    <recommendedName>
        <fullName evidence="1">Undecaprenyl-diphosphatase</fullName>
        <ecNumber evidence="1">3.6.1.27</ecNumber>
    </recommendedName>
    <alternativeName>
        <fullName evidence="1">Bacitracin resistance protein</fullName>
    </alternativeName>
    <alternativeName>
        <fullName evidence="1">Undecaprenyl pyrophosphate phosphatase</fullName>
    </alternativeName>
</protein>
<sequence length="265" mass="28766">MDFIHILALAILQGLTEFLPISSSAHLILLPVLAGWTDQGLAFDVAVHLGTLVAVISYFRLELARMARDWLQSLAAGQQQGESRLAWAVLLGTLPVGLVGIMLTETTQEALRSPLIIAWSTVGFGFLLAYADWAGKQQRNEHTLTWRDILFIGLAQALALIPGTSRSGITITAGLMLGLTREGAARFSFLLAIPVILLAGGLAALDLLNHTETVDWNALALGALISGLCAYACIHYFFKFLQRIGMLPFAVYRLLLGALLFYLFS</sequence>
<dbReference type="EC" id="3.6.1.27" evidence="1"/>
<dbReference type="EMBL" id="CP000127">
    <property type="protein sequence ID" value="ABA59281.1"/>
    <property type="molecule type" value="Genomic_DNA"/>
</dbReference>
<dbReference type="RefSeq" id="WP_002812169.1">
    <property type="nucleotide sequence ID" value="NC_007484.1"/>
</dbReference>
<dbReference type="SMR" id="Q3J7B5"/>
<dbReference type="FunCoup" id="Q3J7B5">
    <property type="interactions" value="308"/>
</dbReference>
<dbReference type="STRING" id="323261.Noc_2835"/>
<dbReference type="KEGG" id="noc:Noc_2835"/>
<dbReference type="eggNOG" id="COG1968">
    <property type="taxonomic scope" value="Bacteria"/>
</dbReference>
<dbReference type="HOGENOM" id="CLU_060296_1_0_6"/>
<dbReference type="InParanoid" id="Q3J7B5"/>
<dbReference type="Proteomes" id="UP000006838">
    <property type="component" value="Chromosome"/>
</dbReference>
<dbReference type="GO" id="GO:0005886">
    <property type="term" value="C:plasma membrane"/>
    <property type="evidence" value="ECO:0007669"/>
    <property type="project" value="UniProtKB-SubCell"/>
</dbReference>
<dbReference type="GO" id="GO:0050380">
    <property type="term" value="F:undecaprenyl-diphosphatase activity"/>
    <property type="evidence" value="ECO:0007669"/>
    <property type="project" value="UniProtKB-UniRule"/>
</dbReference>
<dbReference type="GO" id="GO:0071555">
    <property type="term" value="P:cell wall organization"/>
    <property type="evidence" value="ECO:0007669"/>
    <property type="project" value="UniProtKB-KW"/>
</dbReference>
<dbReference type="GO" id="GO:0009252">
    <property type="term" value="P:peptidoglycan biosynthetic process"/>
    <property type="evidence" value="ECO:0007669"/>
    <property type="project" value="UniProtKB-KW"/>
</dbReference>
<dbReference type="GO" id="GO:0008360">
    <property type="term" value="P:regulation of cell shape"/>
    <property type="evidence" value="ECO:0007669"/>
    <property type="project" value="UniProtKB-KW"/>
</dbReference>
<dbReference type="GO" id="GO:0046677">
    <property type="term" value="P:response to antibiotic"/>
    <property type="evidence" value="ECO:0007669"/>
    <property type="project" value="UniProtKB-UniRule"/>
</dbReference>
<dbReference type="HAMAP" id="MF_01006">
    <property type="entry name" value="Undec_diphosphatase"/>
    <property type="match status" value="1"/>
</dbReference>
<dbReference type="InterPro" id="IPR003824">
    <property type="entry name" value="UppP"/>
</dbReference>
<dbReference type="NCBIfam" id="NF001393">
    <property type="entry name" value="PRK00281.2-4"/>
    <property type="match status" value="1"/>
</dbReference>
<dbReference type="NCBIfam" id="TIGR00753">
    <property type="entry name" value="undec_PP_bacA"/>
    <property type="match status" value="1"/>
</dbReference>
<dbReference type="PANTHER" id="PTHR30622">
    <property type="entry name" value="UNDECAPRENYL-DIPHOSPHATASE"/>
    <property type="match status" value="1"/>
</dbReference>
<dbReference type="PANTHER" id="PTHR30622:SF4">
    <property type="entry name" value="UNDECAPRENYL-DIPHOSPHATASE"/>
    <property type="match status" value="1"/>
</dbReference>
<dbReference type="Pfam" id="PF02673">
    <property type="entry name" value="BacA"/>
    <property type="match status" value="1"/>
</dbReference>
<reference key="1">
    <citation type="journal article" date="2006" name="Appl. Environ. Microbiol.">
        <title>Complete genome sequence of the marine, chemolithoautotrophic, ammonia-oxidizing bacterium Nitrosococcus oceani ATCC 19707.</title>
        <authorList>
            <person name="Klotz M.G."/>
            <person name="Arp D.J."/>
            <person name="Chain P.S.G."/>
            <person name="El-Sheikh A.F."/>
            <person name="Hauser L.J."/>
            <person name="Hommes N.G."/>
            <person name="Larimer F.W."/>
            <person name="Malfatti S.A."/>
            <person name="Norton J.M."/>
            <person name="Poret-Peterson A.T."/>
            <person name="Vergez L.M."/>
            <person name="Ward B.B."/>
        </authorList>
    </citation>
    <scope>NUCLEOTIDE SEQUENCE [LARGE SCALE GENOMIC DNA]</scope>
    <source>
        <strain>ATCC 19707 / BCRC 17464 / JCM 30415 / NCIMB 11848 / C-107</strain>
    </source>
</reference>
<organism>
    <name type="scientific">Nitrosococcus oceani (strain ATCC 19707 / BCRC 17464 / JCM 30415 / NCIMB 11848 / C-107)</name>
    <dbReference type="NCBI Taxonomy" id="323261"/>
    <lineage>
        <taxon>Bacteria</taxon>
        <taxon>Pseudomonadati</taxon>
        <taxon>Pseudomonadota</taxon>
        <taxon>Gammaproteobacteria</taxon>
        <taxon>Chromatiales</taxon>
        <taxon>Chromatiaceae</taxon>
        <taxon>Nitrosococcus</taxon>
    </lineage>
</organism>